<gene>
    <name type="ordered locus">Noca_2816</name>
</gene>
<feature type="chain" id="PRO_0000364887" description="Ferredoxin--NADP reductase">
    <location>
        <begin position="1"/>
        <end position="330"/>
    </location>
</feature>
<feature type="binding site" evidence="1">
    <location>
        <position position="19"/>
    </location>
    <ligand>
        <name>FAD</name>
        <dbReference type="ChEBI" id="CHEBI:57692"/>
    </ligand>
</feature>
<feature type="binding site" evidence="1">
    <location>
        <position position="38"/>
    </location>
    <ligand>
        <name>FAD</name>
        <dbReference type="ChEBI" id="CHEBI:57692"/>
    </ligand>
</feature>
<feature type="binding site" evidence="1">
    <location>
        <position position="46"/>
    </location>
    <ligand>
        <name>FAD</name>
        <dbReference type="ChEBI" id="CHEBI:57692"/>
    </ligand>
</feature>
<feature type="binding site" evidence="1">
    <location>
        <position position="51"/>
    </location>
    <ligand>
        <name>FAD</name>
        <dbReference type="ChEBI" id="CHEBI:57692"/>
    </ligand>
</feature>
<feature type="binding site" evidence="1">
    <location>
        <position position="91"/>
    </location>
    <ligand>
        <name>FAD</name>
        <dbReference type="ChEBI" id="CHEBI:57692"/>
    </ligand>
</feature>
<feature type="binding site" evidence="1">
    <location>
        <position position="129"/>
    </location>
    <ligand>
        <name>FAD</name>
        <dbReference type="ChEBI" id="CHEBI:57692"/>
    </ligand>
</feature>
<feature type="binding site" evidence="1">
    <location>
        <position position="286"/>
    </location>
    <ligand>
        <name>FAD</name>
        <dbReference type="ChEBI" id="CHEBI:57692"/>
    </ligand>
</feature>
<feature type="binding site" evidence="1">
    <location>
        <position position="327"/>
    </location>
    <ligand>
        <name>FAD</name>
        <dbReference type="ChEBI" id="CHEBI:57692"/>
    </ligand>
</feature>
<reference key="1">
    <citation type="submission" date="2006-12" db="EMBL/GenBank/DDBJ databases">
        <title>Complete sequence of chromosome 1 of Nocardioides sp. JS614.</title>
        <authorList>
            <person name="Copeland A."/>
            <person name="Lucas S."/>
            <person name="Lapidus A."/>
            <person name="Barry K."/>
            <person name="Detter J.C."/>
            <person name="Glavina del Rio T."/>
            <person name="Hammon N."/>
            <person name="Israni S."/>
            <person name="Dalin E."/>
            <person name="Tice H."/>
            <person name="Pitluck S."/>
            <person name="Thompson L.S."/>
            <person name="Brettin T."/>
            <person name="Bruce D."/>
            <person name="Han C."/>
            <person name="Tapia R."/>
            <person name="Schmutz J."/>
            <person name="Larimer F."/>
            <person name="Land M."/>
            <person name="Hauser L."/>
            <person name="Kyrpides N."/>
            <person name="Kim E."/>
            <person name="Mattes T."/>
            <person name="Gossett J."/>
            <person name="Richardson P."/>
        </authorList>
    </citation>
    <scope>NUCLEOTIDE SEQUENCE [LARGE SCALE GENOMIC DNA]</scope>
    <source>
        <strain>ATCC BAA-499 / JS614</strain>
    </source>
</reference>
<proteinExistence type="inferred from homology"/>
<comment type="catalytic activity">
    <reaction evidence="1">
        <text>2 reduced [2Fe-2S]-[ferredoxin] + NADP(+) + H(+) = 2 oxidized [2Fe-2S]-[ferredoxin] + NADPH</text>
        <dbReference type="Rhea" id="RHEA:20125"/>
        <dbReference type="Rhea" id="RHEA-COMP:10000"/>
        <dbReference type="Rhea" id="RHEA-COMP:10001"/>
        <dbReference type="ChEBI" id="CHEBI:15378"/>
        <dbReference type="ChEBI" id="CHEBI:33737"/>
        <dbReference type="ChEBI" id="CHEBI:33738"/>
        <dbReference type="ChEBI" id="CHEBI:57783"/>
        <dbReference type="ChEBI" id="CHEBI:58349"/>
        <dbReference type="EC" id="1.18.1.2"/>
    </reaction>
</comment>
<comment type="cofactor">
    <cofactor evidence="1">
        <name>FAD</name>
        <dbReference type="ChEBI" id="CHEBI:57692"/>
    </cofactor>
    <text evidence="1">Binds 1 FAD per subunit.</text>
</comment>
<comment type="subunit">
    <text evidence="1">Homodimer.</text>
</comment>
<comment type="similarity">
    <text evidence="1">Belongs to the ferredoxin--NADP reductase type 2 family.</text>
</comment>
<name>FENR_NOCSJ</name>
<evidence type="ECO:0000255" key="1">
    <source>
        <dbReference type="HAMAP-Rule" id="MF_01685"/>
    </source>
</evidence>
<accession>A1SKI3</accession>
<organism>
    <name type="scientific">Nocardioides sp. (strain ATCC BAA-499 / JS614)</name>
    <dbReference type="NCBI Taxonomy" id="196162"/>
    <lineage>
        <taxon>Bacteria</taxon>
        <taxon>Bacillati</taxon>
        <taxon>Actinomycetota</taxon>
        <taxon>Actinomycetes</taxon>
        <taxon>Propionibacteriales</taxon>
        <taxon>Nocardioidaceae</taxon>
        <taxon>Nocardioides</taxon>
    </lineage>
</organism>
<dbReference type="EC" id="1.18.1.2" evidence="1"/>
<dbReference type="EMBL" id="CP000509">
    <property type="protein sequence ID" value="ABL82318.1"/>
    <property type="molecule type" value="Genomic_DNA"/>
</dbReference>
<dbReference type="RefSeq" id="WP_011756256.1">
    <property type="nucleotide sequence ID" value="NC_008699.1"/>
</dbReference>
<dbReference type="SMR" id="A1SKI3"/>
<dbReference type="STRING" id="196162.Noca_2816"/>
<dbReference type="KEGG" id="nca:Noca_2816"/>
<dbReference type="eggNOG" id="COG0492">
    <property type="taxonomic scope" value="Bacteria"/>
</dbReference>
<dbReference type="HOGENOM" id="CLU_031864_5_5_11"/>
<dbReference type="OrthoDB" id="9806179at2"/>
<dbReference type="Proteomes" id="UP000000640">
    <property type="component" value="Chromosome"/>
</dbReference>
<dbReference type="GO" id="GO:0004324">
    <property type="term" value="F:ferredoxin-NADP+ reductase activity"/>
    <property type="evidence" value="ECO:0007669"/>
    <property type="project" value="UniProtKB-UniRule"/>
</dbReference>
<dbReference type="GO" id="GO:0050660">
    <property type="term" value="F:flavin adenine dinucleotide binding"/>
    <property type="evidence" value="ECO:0007669"/>
    <property type="project" value="UniProtKB-UniRule"/>
</dbReference>
<dbReference type="GO" id="GO:0050661">
    <property type="term" value="F:NADP binding"/>
    <property type="evidence" value="ECO:0007669"/>
    <property type="project" value="UniProtKB-UniRule"/>
</dbReference>
<dbReference type="Gene3D" id="3.50.50.60">
    <property type="entry name" value="FAD/NAD(P)-binding domain"/>
    <property type="match status" value="2"/>
</dbReference>
<dbReference type="HAMAP" id="MF_01685">
    <property type="entry name" value="FENR2"/>
    <property type="match status" value="1"/>
</dbReference>
<dbReference type="InterPro" id="IPR036188">
    <property type="entry name" value="FAD/NAD-bd_sf"/>
</dbReference>
<dbReference type="InterPro" id="IPR023753">
    <property type="entry name" value="FAD/NAD-binding_dom"/>
</dbReference>
<dbReference type="InterPro" id="IPR022890">
    <property type="entry name" value="Fd--NADP_Rdtase_type_2"/>
</dbReference>
<dbReference type="InterPro" id="IPR050097">
    <property type="entry name" value="Ferredoxin-NADP_redctase_2"/>
</dbReference>
<dbReference type="PANTHER" id="PTHR48105">
    <property type="entry name" value="THIOREDOXIN REDUCTASE 1-RELATED-RELATED"/>
    <property type="match status" value="1"/>
</dbReference>
<dbReference type="Pfam" id="PF07992">
    <property type="entry name" value="Pyr_redox_2"/>
    <property type="match status" value="1"/>
</dbReference>
<dbReference type="PRINTS" id="PR00368">
    <property type="entry name" value="FADPNR"/>
</dbReference>
<dbReference type="PRINTS" id="PR00469">
    <property type="entry name" value="PNDRDTASEII"/>
</dbReference>
<dbReference type="SUPFAM" id="SSF51905">
    <property type="entry name" value="FAD/NAD(P)-binding domain"/>
    <property type="match status" value="1"/>
</dbReference>
<keyword id="KW-0274">FAD</keyword>
<keyword id="KW-0285">Flavoprotein</keyword>
<keyword id="KW-0521">NADP</keyword>
<keyword id="KW-0560">Oxidoreductase</keyword>
<keyword id="KW-1185">Reference proteome</keyword>
<sequence length="330" mass="34625">MPTDNAIDVDLLVIGAGPTGLFATYYAGFRGFRVAVVDSLPELGGQITAMYPEKQILDVAGFPSVKGRDLVEGLVAQAATADPTYLLDRTATTLHEDDDAENGAVVVGLDDGTEVRAKAVLITAGIGKFSPRPLPAGDGWLGRGLEFFVPSFAPYAGKDVVIVGGGDSAFDWALHLEPVARSVTLVHRRDGFRAHQRTVEAVQASSVQIVTRAEVSAIRGNGVVESIEITVDGESTERPAQAIVAALGFVADLGPLQQWGLDVEKRHLVVDSSMRTNLARVFAAGDITEYPGKVRLIAVGFGEAATAVNNAAVVIDPSAHVFPGHSSEGS</sequence>
<protein>
    <recommendedName>
        <fullName evidence="1">Ferredoxin--NADP reductase</fullName>
        <shortName evidence="1">FNR</shortName>
        <shortName evidence="1">Fd-NADP(+) reductase</shortName>
        <ecNumber evidence="1">1.18.1.2</ecNumber>
    </recommendedName>
</protein>